<dbReference type="EC" id="1.1.1.85" evidence="1"/>
<dbReference type="EMBL" id="AE017282">
    <property type="protein sequence ID" value="AAU91982.1"/>
    <property type="molecule type" value="Genomic_DNA"/>
</dbReference>
<dbReference type="RefSeq" id="WP_010961307.1">
    <property type="nucleotide sequence ID" value="NC_002977.6"/>
</dbReference>
<dbReference type="SMR" id="Q606F4"/>
<dbReference type="STRING" id="243233.MCA2063"/>
<dbReference type="GeneID" id="88224289"/>
<dbReference type="KEGG" id="mca:MCA2063"/>
<dbReference type="eggNOG" id="COG0473">
    <property type="taxonomic scope" value="Bacteria"/>
</dbReference>
<dbReference type="HOGENOM" id="CLU_031953_0_3_6"/>
<dbReference type="UniPathway" id="UPA00048">
    <property type="reaction ID" value="UER00072"/>
</dbReference>
<dbReference type="Proteomes" id="UP000006821">
    <property type="component" value="Chromosome"/>
</dbReference>
<dbReference type="GO" id="GO:0005829">
    <property type="term" value="C:cytosol"/>
    <property type="evidence" value="ECO:0007669"/>
    <property type="project" value="TreeGrafter"/>
</dbReference>
<dbReference type="GO" id="GO:0003862">
    <property type="term" value="F:3-isopropylmalate dehydrogenase activity"/>
    <property type="evidence" value="ECO:0007669"/>
    <property type="project" value="UniProtKB-UniRule"/>
</dbReference>
<dbReference type="GO" id="GO:0000287">
    <property type="term" value="F:magnesium ion binding"/>
    <property type="evidence" value="ECO:0007669"/>
    <property type="project" value="InterPro"/>
</dbReference>
<dbReference type="GO" id="GO:0051287">
    <property type="term" value="F:NAD binding"/>
    <property type="evidence" value="ECO:0007669"/>
    <property type="project" value="InterPro"/>
</dbReference>
<dbReference type="GO" id="GO:0009098">
    <property type="term" value="P:L-leucine biosynthetic process"/>
    <property type="evidence" value="ECO:0007669"/>
    <property type="project" value="UniProtKB-UniRule"/>
</dbReference>
<dbReference type="FunFam" id="3.40.718.10:FF:000004">
    <property type="entry name" value="3-isopropylmalate dehydrogenase"/>
    <property type="match status" value="1"/>
</dbReference>
<dbReference type="Gene3D" id="3.40.718.10">
    <property type="entry name" value="Isopropylmalate Dehydrogenase"/>
    <property type="match status" value="1"/>
</dbReference>
<dbReference type="HAMAP" id="MF_01033">
    <property type="entry name" value="LeuB_type1"/>
    <property type="match status" value="1"/>
</dbReference>
<dbReference type="InterPro" id="IPR019818">
    <property type="entry name" value="IsoCit/isopropylmalate_DH_CS"/>
</dbReference>
<dbReference type="InterPro" id="IPR024084">
    <property type="entry name" value="IsoPropMal-DH-like_dom"/>
</dbReference>
<dbReference type="InterPro" id="IPR004429">
    <property type="entry name" value="Isopropylmalate_DH"/>
</dbReference>
<dbReference type="NCBIfam" id="TIGR00169">
    <property type="entry name" value="leuB"/>
    <property type="match status" value="1"/>
</dbReference>
<dbReference type="PANTHER" id="PTHR42979">
    <property type="entry name" value="3-ISOPROPYLMALATE DEHYDROGENASE"/>
    <property type="match status" value="1"/>
</dbReference>
<dbReference type="PANTHER" id="PTHR42979:SF1">
    <property type="entry name" value="3-ISOPROPYLMALATE DEHYDROGENASE"/>
    <property type="match status" value="1"/>
</dbReference>
<dbReference type="Pfam" id="PF00180">
    <property type="entry name" value="Iso_dh"/>
    <property type="match status" value="1"/>
</dbReference>
<dbReference type="SMART" id="SM01329">
    <property type="entry name" value="Iso_dh"/>
    <property type="match status" value="1"/>
</dbReference>
<dbReference type="SUPFAM" id="SSF53659">
    <property type="entry name" value="Isocitrate/Isopropylmalate dehydrogenase-like"/>
    <property type="match status" value="1"/>
</dbReference>
<dbReference type="PROSITE" id="PS00470">
    <property type="entry name" value="IDH_IMDH"/>
    <property type="match status" value="1"/>
</dbReference>
<reference key="1">
    <citation type="journal article" date="2004" name="PLoS Biol.">
        <title>Genomic insights into methanotrophy: the complete genome sequence of Methylococcus capsulatus (Bath).</title>
        <authorList>
            <person name="Ward N.L."/>
            <person name="Larsen O."/>
            <person name="Sakwa J."/>
            <person name="Bruseth L."/>
            <person name="Khouri H.M."/>
            <person name="Durkin A.S."/>
            <person name="Dimitrov G."/>
            <person name="Jiang L."/>
            <person name="Scanlan D."/>
            <person name="Kang K.H."/>
            <person name="Lewis M.R."/>
            <person name="Nelson K.E."/>
            <person name="Methe B.A."/>
            <person name="Wu M."/>
            <person name="Heidelberg J.F."/>
            <person name="Paulsen I.T."/>
            <person name="Fouts D.E."/>
            <person name="Ravel J."/>
            <person name="Tettelin H."/>
            <person name="Ren Q."/>
            <person name="Read T.D."/>
            <person name="DeBoy R.T."/>
            <person name="Seshadri R."/>
            <person name="Salzberg S.L."/>
            <person name="Jensen H.B."/>
            <person name="Birkeland N.K."/>
            <person name="Nelson W.C."/>
            <person name="Dodson R.J."/>
            <person name="Grindhaug S.H."/>
            <person name="Holt I.E."/>
            <person name="Eidhammer I."/>
            <person name="Jonasen I."/>
            <person name="Vanaken S."/>
            <person name="Utterback T.R."/>
            <person name="Feldblyum T.V."/>
            <person name="Fraser C.M."/>
            <person name="Lillehaug J.R."/>
            <person name="Eisen J.A."/>
        </authorList>
    </citation>
    <scope>NUCLEOTIDE SEQUENCE [LARGE SCALE GENOMIC DNA]</scope>
    <source>
        <strain>ATCC 33009 / NCIMB 11132 / Bath</strain>
    </source>
</reference>
<sequence length="360" mass="38766">MTIKIAVLPGDGIGPEIVAEALKVLDCLRSDFGLAVETEHALIGGAAYDAHGTPFPKETLELCRAADSILLGAVGGPKWEPLDYSLRPERGLLGLRSELELFSNLRPAVLYPQLVSASTLKPEVVAGLDIMIVRELTGGIYFGKPRGRRINEDGEREGYNTLVYSESEIRRIAHSAFQIARKRNRRLCSIDKANVLECTELWREVVIEVGKDYPDVALSHMYVDNAAMQLVRNPKQFDVMLTDNMFGDILSDCAAMLTGSIGMLPSASLAESGKGMYEPIHGSAPDIAGRGIANPIATILSLAMMLRYSFDDAVSAERIGKAVQTALDQGFRTADIASEGTVEVGTAAMGDAIVAALRAV</sequence>
<keyword id="KW-0028">Amino-acid biosynthesis</keyword>
<keyword id="KW-0100">Branched-chain amino acid biosynthesis</keyword>
<keyword id="KW-0963">Cytoplasm</keyword>
<keyword id="KW-0432">Leucine biosynthesis</keyword>
<keyword id="KW-0460">Magnesium</keyword>
<keyword id="KW-0464">Manganese</keyword>
<keyword id="KW-0479">Metal-binding</keyword>
<keyword id="KW-0520">NAD</keyword>
<keyword id="KW-0560">Oxidoreductase</keyword>
<keyword id="KW-1185">Reference proteome</keyword>
<comment type="function">
    <text evidence="1">Catalyzes the oxidation of 3-carboxy-2-hydroxy-4-methylpentanoate (3-isopropylmalate) to 3-carboxy-4-methyl-2-oxopentanoate. The product decarboxylates to 4-methyl-2 oxopentanoate.</text>
</comment>
<comment type="catalytic activity">
    <reaction evidence="1">
        <text>(2R,3S)-3-isopropylmalate + NAD(+) = 4-methyl-2-oxopentanoate + CO2 + NADH</text>
        <dbReference type="Rhea" id="RHEA:32271"/>
        <dbReference type="ChEBI" id="CHEBI:16526"/>
        <dbReference type="ChEBI" id="CHEBI:17865"/>
        <dbReference type="ChEBI" id="CHEBI:35121"/>
        <dbReference type="ChEBI" id="CHEBI:57540"/>
        <dbReference type="ChEBI" id="CHEBI:57945"/>
        <dbReference type="EC" id="1.1.1.85"/>
    </reaction>
</comment>
<comment type="cofactor">
    <cofactor evidence="1">
        <name>Mg(2+)</name>
        <dbReference type="ChEBI" id="CHEBI:18420"/>
    </cofactor>
    <cofactor evidence="1">
        <name>Mn(2+)</name>
        <dbReference type="ChEBI" id="CHEBI:29035"/>
    </cofactor>
    <text evidence="1">Binds 1 Mg(2+) or Mn(2+) ion per subunit.</text>
</comment>
<comment type="pathway">
    <text evidence="1">Amino-acid biosynthesis; L-leucine biosynthesis; L-leucine from 3-methyl-2-oxobutanoate: step 3/4.</text>
</comment>
<comment type="subunit">
    <text evidence="1">Homodimer.</text>
</comment>
<comment type="subcellular location">
    <subcellularLocation>
        <location evidence="1">Cytoplasm</location>
    </subcellularLocation>
</comment>
<comment type="similarity">
    <text evidence="1">Belongs to the isocitrate and isopropylmalate dehydrogenases family. LeuB type 1 subfamily.</text>
</comment>
<evidence type="ECO:0000255" key="1">
    <source>
        <dbReference type="HAMAP-Rule" id="MF_01033"/>
    </source>
</evidence>
<name>LEU3_METCA</name>
<feature type="chain" id="PRO_0000083708" description="3-isopropylmalate dehydrogenase">
    <location>
        <begin position="1"/>
        <end position="360"/>
    </location>
</feature>
<feature type="binding site" evidence="1">
    <location>
        <begin position="76"/>
        <end position="89"/>
    </location>
    <ligand>
        <name>NAD(+)</name>
        <dbReference type="ChEBI" id="CHEBI:57540"/>
    </ligand>
</feature>
<feature type="binding site" evidence="1">
    <location>
        <position position="96"/>
    </location>
    <ligand>
        <name>substrate</name>
    </ligand>
</feature>
<feature type="binding site" evidence="1">
    <location>
        <position position="106"/>
    </location>
    <ligand>
        <name>substrate</name>
    </ligand>
</feature>
<feature type="binding site" evidence="1">
    <location>
        <position position="134"/>
    </location>
    <ligand>
        <name>substrate</name>
    </ligand>
</feature>
<feature type="binding site" evidence="1">
    <location>
        <position position="224"/>
    </location>
    <ligand>
        <name>Mg(2+)</name>
        <dbReference type="ChEBI" id="CHEBI:18420"/>
    </ligand>
</feature>
<feature type="binding site" evidence="1">
    <location>
        <position position="224"/>
    </location>
    <ligand>
        <name>substrate</name>
    </ligand>
</feature>
<feature type="binding site" evidence="1">
    <location>
        <position position="248"/>
    </location>
    <ligand>
        <name>Mg(2+)</name>
        <dbReference type="ChEBI" id="CHEBI:18420"/>
    </ligand>
</feature>
<feature type="binding site" evidence="1">
    <location>
        <position position="252"/>
    </location>
    <ligand>
        <name>Mg(2+)</name>
        <dbReference type="ChEBI" id="CHEBI:18420"/>
    </ligand>
</feature>
<feature type="binding site" evidence="1">
    <location>
        <begin position="282"/>
        <end position="294"/>
    </location>
    <ligand>
        <name>NAD(+)</name>
        <dbReference type="ChEBI" id="CHEBI:57540"/>
    </ligand>
</feature>
<feature type="site" description="Important for catalysis" evidence="1">
    <location>
        <position position="141"/>
    </location>
</feature>
<feature type="site" description="Important for catalysis" evidence="1">
    <location>
        <position position="192"/>
    </location>
</feature>
<accession>Q606F4</accession>
<protein>
    <recommendedName>
        <fullName evidence="1">3-isopropylmalate dehydrogenase</fullName>
        <ecNumber evidence="1">1.1.1.85</ecNumber>
    </recommendedName>
    <alternativeName>
        <fullName evidence="1">3-IPM-DH</fullName>
    </alternativeName>
    <alternativeName>
        <fullName evidence="1">Beta-IPM dehydrogenase</fullName>
        <shortName evidence="1">IMDH</shortName>
    </alternativeName>
</protein>
<proteinExistence type="inferred from homology"/>
<organism>
    <name type="scientific">Methylococcus capsulatus (strain ATCC 33009 / NCIMB 11132 / Bath)</name>
    <dbReference type="NCBI Taxonomy" id="243233"/>
    <lineage>
        <taxon>Bacteria</taxon>
        <taxon>Pseudomonadati</taxon>
        <taxon>Pseudomonadota</taxon>
        <taxon>Gammaproteobacteria</taxon>
        <taxon>Methylococcales</taxon>
        <taxon>Methylococcaceae</taxon>
        <taxon>Methylococcus</taxon>
    </lineage>
</organism>
<gene>
    <name evidence="1" type="primary">leuB</name>
    <name type="ordered locus">MCA2063</name>
</gene>